<sequence>MSDYKSTLNLPETGFPMRGDLAKREPGMLARWTDDDLYGIIRAAKKGKKTFILHDGPPYANGSIHIGHSVNKILKDIIIKSKGLSGYDSPYVPGWDCHGLPIELKVEQEYGKPGEKFTAAEFRAKCREYAATQVDGQRKDFIRLGVLGDWSHPYLTMDFKTEANIIRALGKIIGNGHLHKGAKPVHWCVDCRSALAEAEVEYYDKTSPSIDVAFLAVDQDALKTKFGVSNVNGPISLVIWTTTPWTLPANRAISIAPDFDYALVQIDGQAVILAKDLVESVMQRIGVSDYTILGTVKGAELELLRFTHPFMDFDVPAILGDHVTLDAGTGAVHTAPGHGPDDYVIGQKYGLETANPVGPDGTYLPGTYPTLDGVNVFKANDIVIALLQEKGALLHVEKMQHSYPCCWRHKTPIIFRATPQWFVSMDQKGLRAQSLKEIKGVQWIPDWGQARIESMVANRPDWCISRQRTWGVPMSLFVHKDTEELHPRTLELMEEVAKRVEVDGIQAWWDLDAKEILGDEADQYVKVPDTLDVWFDSGSTHSSVVDVRPEFAGHAADMYLEGSDQHRGWFMSSLMISTAMKGKAPYRQVLTHGFTVDGQGRKMSKSIGNTVSPQDVMNKLGADILRLWVASTDYTGEMAVSDEILKRAADSYRRIRNTARFLLANLNGFDPAKDMVKPEEMVVLDRWAVGCAKAAQEDILKAYEAYDFHEVVQRLMRFCSVEMGSFYLDIIKDRQYTAKADSVARRSCQTALYHIAEALVRWMAPILSFTADEVWGYLPGEREKYVFTGEWYEGLFGLADSEAMNDAFWDELLKVRGEVNKVIEQARADKKVGGSLEAAVTLYAEPELAAKLTALGDELRFVLLTSGATVADYNDAPADAQQSEVLKGLKVALSKAEGEKCPRCWHYTQDVGKVAEHAEICGRCVSNVAGDGEKRKFA</sequence>
<protein>
    <recommendedName>
        <fullName evidence="1">Isoleucine--tRNA ligase</fullName>
        <ecNumber evidence="1">6.1.1.5</ecNumber>
    </recommendedName>
    <alternativeName>
        <fullName evidence="1">Isoleucyl-tRNA synthetase</fullName>
        <shortName evidence="1">IleRS</shortName>
    </alternativeName>
</protein>
<keyword id="KW-0007">Acetylation</keyword>
<keyword id="KW-0030">Aminoacyl-tRNA synthetase</keyword>
<keyword id="KW-0067">ATP-binding</keyword>
<keyword id="KW-0963">Cytoplasm</keyword>
<keyword id="KW-0436">Ligase</keyword>
<keyword id="KW-0479">Metal-binding</keyword>
<keyword id="KW-0547">Nucleotide-binding</keyword>
<keyword id="KW-0648">Protein biosynthesis</keyword>
<keyword id="KW-1185">Reference proteome</keyword>
<keyword id="KW-0862">Zinc</keyword>
<name>SYI_ECOK1</name>
<organism>
    <name type="scientific">Escherichia coli O1:K1 / APEC</name>
    <dbReference type="NCBI Taxonomy" id="405955"/>
    <lineage>
        <taxon>Bacteria</taxon>
        <taxon>Pseudomonadati</taxon>
        <taxon>Pseudomonadota</taxon>
        <taxon>Gammaproteobacteria</taxon>
        <taxon>Enterobacterales</taxon>
        <taxon>Enterobacteriaceae</taxon>
        <taxon>Escherichia</taxon>
    </lineage>
</organism>
<comment type="function">
    <text evidence="1">Catalyzes the attachment of isoleucine to tRNA(Ile). As IleRS can inadvertently accommodate and process structurally similar amino acids such as valine, to avoid such errors it has two additional distinct tRNA(Ile)-dependent editing activities. One activity is designated as 'pretransfer' editing and involves the hydrolysis of activated Val-AMP. The other activity is designated 'posttransfer' editing and involves deacylation of mischarged Val-tRNA(Ile).</text>
</comment>
<comment type="catalytic activity">
    <reaction evidence="1">
        <text>tRNA(Ile) + L-isoleucine + ATP = L-isoleucyl-tRNA(Ile) + AMP + diphosphate</text>
        <dbReference type="Rhea" id="RHEA:11060"/>
        <dbReference type="Rhea" id="RHEA-COMP:9666"/>
        <dbReference type="Rhea" id="RHEA-COMP:9695"/>
        <dbReference type="ChEBI" id="CHEBI:30616"/>
        <dbReference type="ChEBI" id="CHEBI:33019"/>
        <dbReference type="ChEBI" id="CHEBI:58045"/>
        <dbReference type="ChEBI" id="CHEBI:78442"/>
        <dbReference type="ChEBI" id="CHEBI:78528"/>
        <dbReference type="ChEBI" id="CHEBI:456215"/>
        <dbReference type="EC" id="6.1.1.5"/>
    </reaction>
</comment>
<comment type="cofactor">
    <cofactor evidence="1">
        <name>Zn(2+)</name>
        <dbReference type="ChEBI" id="CHEBI:29105"/>
    </cofactor>
    <text evidence="1">Binds 1 zinc ion per subunit.</text>
</comment>
<comment type="subunit">
    <text evidence="1">Monomer.</text>
</comment>
<comment type="subcellular location">
    <subcellularLocation>
        <location evidence="1">Cytoplasm</location>
    </subcellularLocation>
</comment>
<comment type="domain">
    <text evidence="1">IleRS has two distinct active sites: one for aminoacylation and one for editing. The misactivated valine is translocated from the active site to the editing site, which sterically excludes the correctly activated isoleucine. The single editing site contains two valyl binding pockets, one specific for each substrate (Val-AMP or Val-tRNA(Ile)).</text>
</comment>
<comment type="similarity">
    <text evidence="1">Belongs to the class-I aminoacyl-tRNA synthetase family. IleS type 1 subfamily.</text>
</comment>
<reference key="1">
    <citation type="journal article" date="2007" name="J. Bacteriol.">
        <title>The genome sequence of avian pathogenic Escherichia coli strain O1:K1:H7 shares strong similarities with human extraintestinal pathogenic E. coli genomes.</title>
        <authorList>
            <person name="Johnson T.J."/>
            <person name="Kariyawasam S."/>
            <person name="Wannemuehler Y."/>
            <person name="Mangiamele P."/>
            <person name="Johnson S.J."/>
            <person name="Doetkott C."/>
            <person name="Skyberg J.A."/>
            <person name="Lynne A.M."/>
            <person name="Johnson J.R."/>
            <person name="Nolan L.K."/>
        </authorList>
    </citation>
    <scope>NUCLEOTIDE SEQUENCE [LARGE SCALE GENOMIC DNA]</scope>
</reference>
<accession>A1A774</accession>
<dbReference type="EC" id="6.1.1.5" evidence="1"/>
<dbReference type="EMBL" id="CP000468">
    <property type="protein sequence ID" value="ABI99513.1"/>
    <property type="molecule type" value="Genomic_DNA"/>
</dbReference>
<dbReference type="RefSeq" id="WP_001286813.1">
    <property type="nucleotide sequence ID" value="NZ_CADILS010000013.1"/>
</dbReference>
<dbReference type="SMR" id="A1A774"/>
<dbReference type="KEGG" id="ecv:APECO1_1957"/>
<dbReference type="HOGENOM" id="CLU_001493_7_1_6"/>
<dbReference type="Proteomes" id="UP000008216">
    <property type="component" value="Chromosome"/>
</dbReference>
<dbReference type="GO" id="GO:0005829">
    <property type="term" value="C:cytosol"/>
    <property type="evidence" value="ECO:0007669"/>
    <property type="project" value="TreeGrafter"/>
</dbReference>
<dbReference type="GO" id="GO:0002161">
    <property type="term" value="F:aminoacyl-tRNA deacylase activity"/>
    <property type="evidence" value="ECO:0007669"/>
    <property type="project" value="InterPro"/>
</dbReference>
<dbReference type="GO" id="GO:0005524">
    <property type="term" value="F:ATP binding"/>
    <property type="evidence" value="ECO:0007669"/>
    <property type="project" value="UniProtKB-UniRule"/>
</dbReference>
<dbReference type="GO" id="GO:0004822">
    <property type="term" value="F:isoleucine-tRNA ligase activity"/>
    <property type="evidence" value="ECO:0007669"/>
    <property type="project" value="UniProtKB-UniRule"/>
</dbReference>
<dbReference type="GO" id="GO:0000049">
    <property type="term" value="F:tRNA binding"/>
    <property type="evidence" value="ECO:0007669"/>
    <property type="project" value="InterPro"/>
</dbReference>
<dbReference type="GO" id="GO:0008270">
    <property type="term" value="F:zinc ion binding"/>
    <property type="evidence" value="ECO:0007669"/>
    <property type="project" value="UniProtKB-UniRule"/>
</dbReference>
<dbReference type="GO" id="GO:0006428">
    <property type="term" value="P:isoleucyl-tRNA aminoacylation"/>
    <property type="evidence" value="ECO:0007669"/>
    <property type="project" value="UniProtKB-UniRule"/>
</dbReference>
<dbReference type="CDD" id="cd07960">
    <property type="entry name" value="Anticodon_Ia_Ile_BEm"/>
    <property type="match status" value="1"/>
</dbReference>
<dbReference type="CDD" id="cd00818">
    <property type="entry name" value="IleRS_core"/>
    <property type="match status" value="1"/>
</dbReference>
<dbReference type="FunFam" id="1.10.730.20:FF:000001">
    <property type="entry name" value="Isoleucine--tRNA ligase"/>
    <property type="match status" value="1"/>
</dbReference>
<dbReference type="FunFam" id="3.40.50.620:FF:000042">
    <property type="entry name" value="Isoleucine--tRNA ligase"/>
    <property type="match status" value="1"/>
</dbReference>
<dbReference type="FunFam" id="3.40.50.620:FF:000048">
    <property type="entry name" value="Isoleucine--tRNA ligase"/>
    <property type="match status" value="1"/>
</dbReference>
<dbReference type="FunFam" id="3.90.740.10:FF:000002">
    <property type="entry name" value="Isoleucine--tRNA ligase"/>
    <property type="match status" value="1"/>
</dbReference>
<dbReference type="Gene3D" id="1.10.730.20">
    <property type="match status" value="1"/>
</dbReference>
<dbReference type="Gene3D" id="3.40.50.620">
    <property type="entry name" value="HUPs"/>
    <property type="match status" value="2"/>
</dbReference>
<dbReference type="Gene3D" id="3.90.740.10">
    <property type="entry name" value="Valyl/Leucyl/Isoleucyl-tRNA synthetase, editing domain"/>
    <property type="match status" value="1"/>
</dbReference>
<dbReference type="HAMAP" id="MF_02002">
    <property type="entry name" value="Ile_tRNA_synth_type1"/>
    <property type="match status" value="1"/>
</dbReference>
<dbReference type="InterPro" id="IPR001412">
    <property type="entry name" value="aa-tRNA-synth_I_CS"/>
</dbReference>
<dbReference type="InterPro" id="IPR002300">
    <property type="entry name" value="aa-tRNA-synth_Ia"/>
</dbReference>
<dbReference type="InterPro" id="IPR033708">
    <property type="entry name" value="Anticodon_Ile_BEm"/>
</dbReference>
<dbReference type="InterPro" id="IPR002301">
    <property type="entry name" value="Ile-tRNA-ligase"/>
</dbReference>
<dbReference type="InterPro" id="IPR023585">
    <property type="entry name" value="Ile-tRNA-ligase_type1"/>
</dbReference>
<dbReference type="InterPro" id="IPR050081">
    <property type="entry name" value="Ile-tRNA_ligase"/>
</dbReference>
<dbReference type="InterPro" id="IPR013155">
    <property type="entry name" value="M/V/L/I-tRNA-synth_anticd-bd"/>
</dbReference>
<dbReference type="InterPro" id="IPR014729">
    <property type="entry name" value="Rossmann-like_a/b/a_fold"/>
</dbReference>
<dbReference type="InterPro" id="IPR009080">
    <property type="entry name" value="tRNAsynth_Ia_anticodon-bd"/>
</dbReference>
<dbReference type="InterPro" id="IPR009008">
    <property type="entry name" value="Val/Leu/Ile-tRNA-synth_edit"/>
</dbReference>
<dbReference type="InterPro" id="IPR010663">
    <property type="entry name" value="Znf_FPG/IleRS"/>
</dbReference>
<dbReference type="NCBIfam" id="TIGR00392">
    <property type="entry name" value="ileS"/>
    <property type="match status" value="1"/>
</dbReference>
<dbReference type="PANTHER" id="PTHR42765:SF1">
    <property type="entry name" value="ISOLEUCINE--TRNA LIGASE, MITOCHONDRIAL"/>
    <property type="match status" value="1"/>
</dbReference>
<dbReference type="PANTHER" id="PTHR42765">
    <property type="entry name" value="SOLEUCYL-TRNA SYNTHETASE"/>
    <property type="match status" value="1"/>
</dbReference>
<dbReference type="Pfam" id="PF08264">
    <property type="entry name" value="Anticodon_1"/>
    <property type="match status" value="1"/>
</dbReference>
<dbReference type="Pfam" id="PF00133">
    <property type="entry name" value="tRNA-synt_1"/>
    <property type="match status" value="1"/>
</dbReference>
<dbReference type="Pfam" id="PF06827">
    <property type="entry name" value="zf-FPG_IleRS"/>
    <property type="match status" value="1"/>
</dbReference>
<dbReference type="PRINTS" id="PR00984">
    <property type="entry name" value="TRNASYNTHILE"/>
</dbReference>
<dbReference type="SUPFAM" id="SSF47323">
    <property type="entry name" value="Anticodon-binding domain of a subclass of class I aminoacyl-tRNA synthetases"/>
    <property type="match status" value="1"/>
</dbReference>
<dbReference type="SUPFAM" id="SSF52374">
    <property type="entry name" value="Nucleotidylyl transferase"/>
    <property type="match status" value="1"/>
</dbReference>
<dbReference type="SUPFAM" id="SSF50677">
    <property type="entry name" value="ValRS/IleRS/LeuRS editing domain"/>
    <property type="match status" value="1"/>
</dbReference>
<dbReference type="PROSITE" id="PS00178">
    <property type="entry name" value="AA_TRNA_LIGASE_I"/>
    <property type="match status" value="1"/>
</dbReference>
<evidence type="ECO:0000255" key="1">
    <source>
        <dbReference type="HAMAP-Rule" id="MF_02002"/>
    </source>
</evidence>
<proteinExistence type="inferred from homology"/>
<gene>
    <name evidence="1" type="primary">ileS</name>
    <name type="ordered locus">Ecok1_00200</name>
    <name type="ORF">APECO1_1957</name>
</gene>
<feature type="chain" id="PRO_1000022061" description="Isoleucine--tRNA ligase">
    <location>
        <begin position="1"/>
        <end position="938"/>
    </location>
</feature>
<feature type="short sequence motif" description="'HIGH' region">
    <location>
        <begin position="58"/>
        <end position="68"/>
    </location>
</feature>
<feature type="short sequence motif" description="'KMSKS' region">
    <location>
        <begin position="602"/>
        <end position="606"/>
    </location>
</feature>
<feature type="binding site" evidence="1">
    <location>
        <position position="561"/>
    </location>
    <ligand>
        <name>L-isoleucyl-5'-AMP</name>
        <dbReference type="ChEBI" id="CHEBI:178002"/>
    </ligand>
</feature>
<feature type="binding site" evidence="1">
    <location>
        <position position="605"/>
    </location>
    <ligand>
        <name>ATP</name>
        <dbReference type="ChEBI" id="CHEBI:30616"/>
    </ligand>
</feature>
<feature type="binding site" evidence="1">
    <location>
        <position position="901"/>
    </location>
    <ligand>
        <name>Zn(2+)</name>
        <dbReference type="ChEBI" id="CHEBI:29105"/>
    </ligand>
</feature>
<feature type="binding site" evidence="1">
    <location>
        <position position="904"/>
    </location>
    <ligand>
        <name>Zn(2+)</name>
        <dbReference type="ChEBI" id="CHEBI:29105"/>
    </ligand>
</feature>
<feature type="binding site" evidence="1">
    <location>
        <position position="921"/>
    </location>
    <ligand>
        <name>Zn(2+)</name>
        <dbReference type="ChEBI" id="CHEBI:29105"/>
    </ligand>
</feature>
<feature type="binding site" evidence="1">
    <location>
        <position position="924"/>
    </location>
    <ligand>
        <name>Zn(2+)</name>
        <dbReference type="ChEBI" id="CHEBI:29105"/>
    </ligand>
</feature>
<feature type="modified residue" description="N6-acetyllysine" evidence="1">
    <location>
        <position position="183"/>
    </location>
</feature>